<accession>Q9ZWT2</accession>
<dbReference type="EMBL" id="AB007802">
    <property type="protein sequence ID" value="BAA74840.1"/>
    <property type="molecule type" value="mRNA"/>
</dbReference>
<dbReference type="EMBL" id="AB012242">
    <property type="protein sequence ID" value="BAB09434.1"/>
    <property type="molecule type" value="Genomic_DNA"/>
</dbReference>
<dbReference type="EMBL" id="CP002688">
    <property type="protein sequence ID" value="AED95727.1"/>
    <property type="molecule type" value="Genomic_DNA"/>
</dbReference>
<dbReference type="EMBL" id="AF370256">
    <property type="protein sequence ID" value="AAK44071.1"/>
    <property type="molecule type" value="mRNA"/>
</dbReference>
<dbReference type="EMBL" id="AY063073">
    <property type="protein sequence ID" value="AAL34247.1"/>
    <property type="molecule type" value="mRNA"/>
</dbReference>
<dbReference type="EMBL" id="AY086738">
    <property type="protein sequence ID" value="AAM63789.1"/>
    <property type="molecule type" value="mRNA"/>
</dbReference>
<dbReference type="PIR" id="T52468">
    <property type="entry name" value="T52468"/>
</dbReference>
<dbReference type="RefSeq" id="NP_199692.1">
    <property type="nucleotide sequence ID" value="NM_124258.4"/>
</dbReference>
<dbReference type="SMR" id="Q9ZWT2"/>
<dbReference type="BioGRID" id="20185">
    <property type="interactions" value="6"/>
</dbReference>
<dbReference type="FunCoup" id="Q9ZWT2">
    <property type="interactions" value="3156"/>
</dbReference>
<dbReference type="IntAct" id="Q9ZWT2">
    <property type="interactions" value="2"/>
</dbReference>
<dbReference type="STRING" id="3702.Q9ZWT2"/>
<dbReference type="iPTMnet" id="Q9ZWT2"/>
<dbReference type="PaxDb" id="3702-AT5G48810.1"/>
<dbReference type="ProteomicsDB" id="220330"/>
<dbReference type="EnsemblPlants" id="AT5G48810.1">
    <property type="protein sequence ID" value="AT5G48810.1"/>
    <property type="gene ID" value="AT5G48810"/>
</dbReference>
<dbReference type="GeneID" id="834939"/>
<dbReference type="Gramene" id="AT5G48810.1">
    <property type="protein sequence ID" value="AT5G48810.1"/>
    <property type="gene ID" value="AT5G48810"/>
</dbReference>
<dbReference type="KEGG" id="ath:AT5G48810"/>
<dbReference type="Araport" id="AT5G48810"/>
<dbReference type="TAIR" id="AT5G48810">
    <property type="gene designation" value="CB5-D"/>
</dbReference>
<dbReference type="eggNOG" id="KOG0537">
    <property type="taxonomic scope" value="Eukaryota"/>
</dbReference>
<dbReference type="HOGENOM" id="CLU_102602_3_0_1"/>
<dbReference type="InParanoid" id="Q9ZWT2"/>
<dbReference type="OMA" id="DSMESCW"/>
<dbReference type="OrthoDB" id="260519at2759"/>
<dbReference type="PhylomeDB" id="Q9ZWT2"/>
<dbReference type="CD-CODE" id="4299E36E">
    <property type="entry name" value="Nucleolus"/>
</dbReference>
<dbReference type="PRO" id="PR:Q9ZWT2"/>
<dbReference type="Proteomes" id="UP000006548">
    <property type="component" value="Chromosome 5"/>
</dbReference>
<dbReference type="ExpressionAtlas" id="Q9ZWT2">
    <property type="expression patterns" value="baseline and differential"/>
</dbReference>
<dbReference type="GO" id="GO:0005783">
    <property type="term" value="C:endoplasmic reticulum"/>
    <property type="evidence" value="ECO:0007005"/>
    <property type="project" value="TAIR"/>
</dbReference>
<dbReference type="GO" id="GO:0005789">
    <property type="term" value="C:endoplasmic reticulum membrane"/>
    <property type="evidence" value="ECO:0000303"/>
    <property type="project" value="TAIR"/>
</dbReference>
<dbReference type="GO" id="GO:0009536">
    <property type="term" value="C:plastid"/>
    <property type="evidence" value="ECO:0007005"/>
    <property type="project" value="TAIR"/>
</dbReference>
<dbReference type="GO" id="GO:0020037">
    <property type="term" value="F:heme binding"/>
    <property type="evidence" value="ECO:0007669"/>
    <property type="project" value="InterPro"/>
</dbReference>
<dbReference type="GO" id="GO:0046872">
    <property type="term" value="F:metal ion binding"/>
    <property type="evidence" value="ECO:0007669"/>
    <property type="project" value="UniProtKB-KW"/>
</dbReference>
<dbReference type="FunFam" id="3.10.120.10:FF:000002">
    <property type="entry name" value="Cytochrome b5 type B"/>
    <property type="match status" value="1"/>
</dbReference>
<dbReference type="Gene3D" id="3.10.120.10">
    <property type="entry name" value="Cytochrome b5-like heme/steroid binding domain"/>
    <property type="match status" value="1"/>
</dbReference>
<dbReference type="InterPro" id="IPR001199">
    <property type="entry name" value="Cyt_B5-like_heme/steroid-bd"/>
</dbReference>
<dbReference type="InterPro" id="IPR036400">
    <property type="entry name" value="Cyt_B5-like_heme/steroid_sf"/>
</dbReference>
<dbReference type="InterPro" id="IPR018506">
    <property type="entry name" value="Cyt_B5_heme-BS"/>
</dbReference>
<dbReference type="InterPro" id="IPR050668">
    <property type="entry name" value="Cytochrome_b5"/>
</dbReference>
<dbReference type="PANTHER" id="PTHR19359">
    <property type="entry name" value="CYTOCHROME B5"/>
    <property type="match status" value="1"/>
</dbReference>
<dbReference type="PANTHER" id="PTHR19359:SF14">
    <property type="entry name" value="CYTOCHROME B5 A"/>
    <property type="match status" value="1"/>
</dbReference>
<dbReference type="Pfam" id="PF00173">
    <property type="entry name" value="Cyt-b5"/>
    <property type="match status" value="1"/>
</dbReference>
<dbReference type="PRINTS" id="PR00363">
    <property type="entry name" value="CYTOCHROMEB5"/>
</dbReference>
<dbReference type="SMART" id="SM01117">
    <property type="entry name" value="Cyt-b5"/>
    <property type="match status" value="1"/>
</dbReference>
<dbReference type="SUPFAM" id="SSF55856">
    <property type="entry name" value="Cytochrome b5-like heme/steroid binding domain"/>
    <property type="match status" value="1"/>
</dbReference>
<dbReference type="PROSITE" id="PS00191">
    <property type="entry name" value="CYTOCHROME_B5_1"/>
    <property type="match status" value="1"/>
</dbReference>
<dbReference type="PROSITE" id="PS50255">
    <property type="entry name" value="CYTOCHROME_B5_2"/>
    <property type="match status" value="1"/>
</dbReference>
<gene>
    <name evidence="10" type="primary">CYTB5-D</name>
    <name type="synonym">B5-B</name>
    <name evidence="9" type="synonym">CB5-B</name>
    <name evidence="8" type="synonym">CB5-D</name>
    <name type="ordered locus">At5g48810</name>
    <name type="ORF">K24G6.14</name>
</gene>
<proteinExistence type="evidence at protein level"/>
<evidence type="ECO:0000255" key="1"/>
<evidence type="ECO:0000255" key="2">
    <source>
        <dbReference type="PROSITE-ProRule" id="PRU00279"/>
    </source>
</evidence>
<evidence type="ECO:0000269" key="3">
    <source>
    </source>
</evidence>
<evidence type="ECO:0000269" key="4">
    <source>
    </source>
</evidence>
<evidence type="ECO:0000269" key="5">
    <source>
    </source>
</evidence>
<evidence type="ECO:0000269" key="6">
    <source>
    </source>
</evidence>
<evidence type="ECO:0000269" key="7">
    <source>
    </source>
</evidence>
<evidence type="ECO:0000303" key="8">
    <source>
    </source>
</evidence>
<evidence type="ECO:0000303" key="9">
    <source>
    </source>
</evidence>
<evidence type="ECO:0000305" key="10"/>
<comment type="function">
    <text evidence="5 7">Membrane bound hemoprotein which function as an electron carrier for several membrane bound oxygenases, including fatty acid desaturases.</text>
</comment>
<comment type="subunit">
    <text evidence="4 6">Interacts with CER1, BI-1, FAH1 and FAH2.</text>
</comment>
<comment type="subcellular location">
    <subcellularLocation>
        <location evidence="3 6">Endoplasmic reticulum membrane</location>
        <topology evidence="3 6">Single-pass membrane protein</topology>
    </subcellularLocation>
</comment>
<comment type="tissue specificity">
    <text evidence="7">Expressed in roots, stems, leaves, flowers and siliques.</text>
</comment>
<comment type="similarity">
    <text evidence="10">Belongs to the cytochrome b5 family.</text>
</comment>
<sequence length="140" mass="15097">MGGDGKVFTLSEVSQHSSAKDCWIVIDGKVYDVTKFLDDHPGGDEVILTSTGKDATDDFEDVGHSSTAKAMLDEYYVGDIDTATVPVKAKFVPPTSTKAVATQDKSSDFVIKLLQFLVPLLILGLAFGIRYYTKTKAPSS</sequence>
<keyword id="KW-0249">Electron transport</keyword>
<keyword id="KW-0256">Endoplasmic reticulum</keyword>
<keyword id="KW-0349">Heme</keyword>
<keyword id="KW-0408">Iron</keyword>
<keyword id="KW-0472">Membrane</keyword>
<keyword id="KW-0479">Metal-binding</keyword>
<keyword id="KW-1185">Reference proteome</keyword>
<keyword id="KW-0812">Transmembrane</keyword>
<keyword id="KW-1133">Transmembrane helix</keyword>
<keyword id="KW-0813">Transport</keyword>
<name>CYB5D_ARATH</name>
<protein>
    <recommendedName>
        <fullName evidence="8">Cytochrome B5 isoform D</fullName>
        <shortName evidence="8">AtCb5-D</shortName>
    </recommendedName>
    <alternativeName>
        <fullName evidence="9">Cytochrome b5 isoform B</fullName>
        <shortName evidence="9">AtCb5-B</shortName>
    </alternativeName>
</protein>
<feature type="chain" id="PRO_0000419613" description="Cytochrome B5 isoform D">
    <location>
        <begin position="1"/>
        <end position="140"/>
    </location>
</feature>
<feature type="transmembrane region" description="Helical" evidence="1">
    <location>
        <begin position="109"/>
        <end position="129"/>
    </location>
</feature>
<feature type="domain" description="Cytochrome b5 heme-binding" evidence="2">
    <location>
        <begin position="5"/>
        <end position="81"/>
    </location>
</feature>
<feature type="binding site" description="axial binding residue" evidence="2">
    <location>
        <position position="40"/>
    </location>
    <ligand>
        <name>heme</name>
        <dbReference type="ChEBI" id="CHEBI:30413"/>
    </ligand>
    <ligandPart>
        <name>Fe</name>
        <dbReference type="ChEBI" id="CHEBI:18248"/>
    </ligandPart>
</feature>
<feature type="binding site" description="axial binding residue" evidence="2">
    <location>
        <position position="64"/>
    </location>
    <ligand>
        <name>heme</name>
        <dbReference type="ChEBI" id="CHEBI:30413"/>
    </ligand>
    <ligandPart>
        <name>Fe</name>
        <dbReference type="ChEBI" id="CHEBI:18248"/>
    </ligandPart>
</feature>
<organism>
    <name type="scientific">Arabidopsis thaliana</name>
    <name type="common">Mouse-ear cress</name>
    <dbReference type="NCBI Taxonomy" id="3702"/>
    <lineage>
        <taxon>Eukaryota</taxon>
        <taxon>Viridiplantae</taxon>
        <taxon>Streptophyta</taxon>
        <taxon>Embryophyta</taxon>
        <taxon>Tracheophyta</taxon>
        <taxon>Spermatophyta</taxon>
        <taxon>Magnoliopsida</taxon>
        <taxon>eudicotyledons</taxon>
        <taxon>Gunneridae</taxon>
        <taxon>Pentapetalae</taxon>
        <taxon>rosids</taxon>
        <taxon>malvids</taxon>
        <taxon>Brassicales</taxon>
        <taxon>Brassicaceae</taxon>
        <taxon>Camelineae</taxon>
        <taxon>Arabidopsis</taxon>
    </lineage>
</organism>
<reference key="1">
    <citation type="journal article" date="1999" name="Plant Physiol.">
        <title>Microsomal electron transfer in higher plants: cloning and heterologous expression of NADH-cytochrome b5 reductase from Arabidopsis.</title>
        <authorList>
            <person name="Fukuchi-Mizutani M."/>
            <person name="Mizutani M."/>
            <person name="Tanaka Y."/>
            <person name="Kusumi T."/>
            <person name="Ohta D."/>
        </authorList>
    </citation>
    <scope>NUCLEOTIDE SEQUENCE [MRNA]</scope>
    <scope>FUNCTION</scope>
    <scope>TISSUE SPECIFICITY</scope>
    <source>
        <strain>cv. Columbia</strain>
    </source>
</reference>
<reference key="2">
    <citation type="journal article" date="1998" name="DNA Res.">
        <title>Structural analysis of Arabidopsis thaliana chromosome 5. VI. Sequence features of the regions of 1,367,185 bp covered by 19 physically assigned P1 and TAC clones.</title>
        <authorList>
            <person name="Kotani H."/>
            <person name="Nakamura Y."/>
            <person name="Sato S."/>
            <person name="Asamizu E."/>
            <person name="Kaneko T."/>
            <person name="Miyajima N."/>
            <person name="Tabata S."/>
        </authorList>
    </citation>
    <scope>NUCLEOTIDE SEQUENCE [LARGE SCALE GENOMIC DNA]</scope>
    <source>
        <strain>cv. Columbia</strain>
    </source>
</reference>
<reference key="3">
    <citation type="journal article" date="2017" name="Plant J.">
        <title>Araport11: a complete reannotation of the Arabidopsis thaliana reference genome.</title>
        <authorList>
            <person name="Cheng C.Y."/>
            <person name="Krishnakumar V."/>
            <person name="Chan A.P."/>
            <person name="Thibaud-Nissen F."/>
            <person name="Schobel S."/>
            <person name="Town C.D."/>
        </authorList>
    </citation>
    <scope>GENOME REANNOTATION</scope>
    <source>
        <strain>cv. Columbia</strain>
    </source>
</reference>
<reference key="4">
    <citation type="journal article" date="2003" name="Science">
        <title>Empirical analysis of transcriptional activity in the Arabidopsis genome.</title>
        <authorList>
            <person name="Yamada K."/>
            <person name="Lim J."/>
            <person name="Dale J.M."/>
            <person name="Chen H."/>
            <person name="Shinn P."/>
            <person name="Palm C.J."/>
            <person name="Southwick A.M."/>
            <person name="Wu H.C."/>
            <person name="Kim C.J."/>
            <person name="Nguyen M."/>
            <person name="Pham P.K."/>
            <person name="Cheuk R.F."/>
            <person name="Karlin-Newmann G."/>
            <person name="Liu S.X."/>
            <person name="Lam B."/>
            <person name="Sakano H."/>
            <person name="Wu T."/>
            <person name="Yu G."/>
            <person name="Miranda M."/>
            <person name="Quach H.L."/>
            <person name="Tripp M."/>
            <person name="Chang C.H."/>
            <person name="Lee J.M."/>
            <person name="Toriumi M.J."/>
            <person name="Chan M.M."/>
            <person name="Tang C.C."/>
            <person name="Onodera C.S."/>
            <person name="Deng J.M."/>
            <person name="Akiyama K."/>
            <person name="Ansari Y."/>
            <person name="Arakawa T."/>
            <person name="Banh J."/>
            <person name="Banno F."/>
            <person name="Bowser L."/>
            <person name="Brooks S.Y."/>
            <person name="Carninci P."/>
            <person name="Chao Q."/>
            <person name="Choy N."/>
            <person name="Enju A."/>
            <person name="Goldsmith A.D."/>
            <person name="Gurjal M."/>
            <person name="Hansen N.F."/>
            <person name="Hayashizaki Y."/>
            <person name="Johnson-Hopson C."/>
            <person name="Hsuan V.W."/>
            <person name="Iida K."/>
            <person name="Karnes M."/>
            <person name="Khan S."/>
            <person name="Koesema E."/>
            <person name="Ishida J."/>
            <person name="Jiang P.X."/>
            <person name="Jones T."/>
            <person name="Kawai J."/>
            <person name="Kamiya A."/>
            <person name="Meyers C."/>
            <person name="Nakajima M."/>
            <person name="Narusaka M."/>
            <person name="Seki M."/>
            <person name="Sakurai T."/>
            <person name="Satou M."/>
            <person name="Tamse R."/>
            <person name="Vaysberg M."/>
            <person name="Wallender E.K."/>
            <person name="Wong C."/>
            <person name="Yamamura Y."/>
            <person name="Yuan S."/>
            <person name="Shinozaki K."/>
            <person name="Davis R.W."/>
            <person name="Theologis A."/>
            <person name="Ecker J.R."/>
        </authorList>
    </citation>
    <scope>NUCLEOTIDE SEQUENCE [LARGE SCALE MRNA]</scope>
    <source>
        <strain>cv. Columbia</strain>
    </source>
</reference>
<reference key="5">
    <citation type="submission" date="2002-03" db="EMBL/GenBank/DDBJ databases">
        <title>Full-length cDNA from Arabidopsis thaliana.</title>
        <authorList>
            <person name="Brover V.V."/>
            <person name="Troukhan M.E."/>
            <person name="Alexandrov N.A."/>
            <person name="Lu Y.-P."/>
            <person name="Flavell R.B."/>
            <person name="Feldmann K.A."/>
        </authorList>
    </citation>
    <scope>NUCLEOTIDE SEQUENCE [LARGE SCALE MRNA]</scope>
</reference>
<reference key="6">
    <citation type="journal article" date="2007" name="J. Exp. Bot.">
        <title>Intracellular sorting of the tail-anchored protein cytochrome b5 in plants: a comparative study using different isoforms from rabbit and Arabidopsis.</title>
        <authorList>
            <person name="Maggio C."/>
            <person name="Barbante A."/>
            <person name="Ferro F."/>
            <person name="Frigerio L."/>
            <person name="Pedrazzini E."/>
        </authorList>
    </citation>
    <scope>SUBCELLULAR LOCATION</scope>
</reference>
<reference key="7">
    <citation type="journal article" date="2009" name="Plant J.">
        <title>Functional association of cell death suppressor, Arabidopsis Bax inhibitor-1, with fatty acid 2-hydroxylation through cytochrome b(5).</title>
        <authorList>
            <person name="Nagano M."/>
            <person name="Ihara-Ohori Y."/>
            <person name="Imai H."/>
            <person name="Inada N."/>
            <person name="Fujimoto M."/>
            <person name="Tsutsumi N."/>
            <person name="Uchimiya H."/>
            <person name="Kawai-Yamada M."/>
        </authorList>
    </citation>
    <scope>INTERACTION WITH BI-1; FAH1 AND FAH2</scope>
    <scope>NOMENCLATURE</scope>
</reference>
<reference key="8">
    <citation type="journal article" date="2012" name="Plant Cell">
        <title>Reconstitution of plant alkane biosynthesis in yeast demonstrates that Arabidopsis ECERIFERUM1 and ECERIFERUM3 are core components of a very-long-chain alkane synthesis complex.</title>
        <authorList>
            <person name="Bernard A."/>
            <person name="Domergue F."/>
            <person name="Pascal S."/>
            <person name="Jetter R."/>
            <person name="Renne C."/>
            <person name="Faure J.D."/>
            <person name="Haslam R.P."/>
            <person name="Napier J.A."/>
            <person name="Lessire R."/>
            <person name="Joubes J."/>
        </authorList>
    </citation>
    <scope>INTERACTION WITH CER1</scope>
    <scope>SUBCELLULAR LOCATION</scope>
    <source>
        <strain>cv. Columbia</strain>
    </source>
</reference>
<reference key="9">
    <citation type="journal article" date="2012" name="PLoS ONE">
        <title>Higher plant cytochrome b5 polypeptides modulate fatty acid desaturation.</title>
        <authorList>
            <person name="Kumar R."/>
            <person name="Tran L.S."/>
            <person name="Neelakandan A.K."/>
            <person name="Nguyen H.T."/>
        </authorList>
    </citation>
    <scope>FUNCTION</scope>
    <scope>NOMENCLATURE</scope>
</reference>